<protein>
    <recommendedName>
        <fullName evidence="22">Gasdermin-E</fullName>
    </recommendedName>
    <alternativeName>
        <fullName evidence="23">Inversely correlated with estrogen receptor expression 1</fullName>
        <shortName evidence="23">ICERE-1</shortName>
    </alternativeName>
    <alternativeName>
        <fullName evidence="24">Non-syndromic hearing impairment protein 5</fullName>
    </alternativeName>
    <component>
        <recommendedName>
            <fullName evidence="22">Gasdermin-E, N-terminal</fullName>
            <shortName evidence="22">GSDME-NT</shortName>
        </recommendedName>
    </component>
    <component>
        <recommendedName>
            <fullName evidence="22">Gasdermin-E, C-terminal</fullName>
            <shortName evidence="22">GSDME-CT</shortName>
        </recommendedName>
    </component>
</protein>
<feature type="chain" id="PRO_0000148178" description="Gasdermin-E">
    <location>
        <begin position="1"/>
        <end position="496"/>
    </location>
</feature>
<feature type="chain" id="PRO_0000442786" description="Gasdermin-E, N-terminal" evidence="8 28 29">
    <location>
        <begin position="1"/>
        <end position="270"/>
    </location>
</feature>
<feature type="chain" id="PRO_0000442787" description="Gasdermin-E, C-terminal" evidence="28">
    <location>
        <begin position="271"/>
        <end position="496"/>
    </location>
</feature>
<feature type="region of interest" description="Membrane targeting domain" evidence="9">
    <location>
        <begin position="1"/>
        <end position="56"/>
    </location>
</feature>
<feature type="site" description="Cleavage; by CASP3 or granzyme B" evidence="10 12">
    <location>
        <begin position="270"/>
        <end position="271"/>
    </location>
</feature>
<feature type="modified residue" description="S-(2-succinyl)cysteine" evidence="13">
    <location>
        <position position="45"/>
    </location>
</feature>
<feature type="modified residue" description="S-(2-succinyl)cysteine" evidence="13">
    <location>
        <position position="156"/>
    </location>
</feature>
<feature type="modified residue" description="S-(2-succinyl)cysteine" evidence="13">
    <location>
        <position position="168"/>
    </location>
</feature>
<feature type="modified residue" description="S-(2-succinyl)cysteine" evidence="13">
    <location>
        <position position="180"/>
    </location>
</feature>
<feature type="modified residue" description="S-(2-succinyl)cysteine" evidence="13">
    <location>
        <position position="235"/>
    </location>
</feature>
<feature type="modified residue" description="S-(2-succinyl)cysteine" evidence="13">
    <location>
        <position position="371"/>
    </location>
</feature>
<feature type="modified residue" description="S-(2-succinyl)cysteine" evidence="13">
    <location>
        <position position="408"/>
    </location>
</feature>
<feature type="modified residue" description="S-(2-succinyl)cysteine" evidence="13">
    <location>
        <position position="417"/>
    </location>
</feature>
<feature type="modified residue" description="S-(2-succinyl)cysteine" evidence="13">
    <location>
        <position position="489"/>
    </location>
</feature>
<feature type="cross-link" description="Glycyl lysine isopeptide (Lys-Gly) (interchain with G-Cter in ubiquitin)" evidence="17">
    <location>
        <position position="120"/>
    </location>
</feature>
<feature type="cross-link" description="Glycyl lysine isopeptide (Lys-Gly) (interchain with G-Cter in ubiquitin)" evidence="17">
    <location>
        <position position="189"/>
    </location>
</feature>
<feature type="splice variant" id="VSP_004190" description="In isoform 2." evidence="25 26">
    <location>
        <begin position="1"/>
        <end position="395"/>
    </location>
</feature>
<feature type="splice variant" id="VSP_044276" description="In isoform 3." evidence="20">
    <location>
        <begin position="1"/>
        <end position="164"/>
    </location>
</feature>
<feature type="sequence variant" id="VAR_083903" description="In a breast carcinoma sample; somatic mutation; reduced ability to induce pyroptosis." evidence="12">
    <original>D</original>
    <variation>Y</variation>
    <location>
        <position position="14"/>
    </location>
</feature>
<feature type="sequence variant" id="VAR_083904" description="In a colon adenocarcinoma sample; somatic mutation; reduced ability to induce pyroptosis." evidence="12">
    <original>D</original>
    <variation>V</variation>
    <location>
        <position position="18"/>
    </location>
</feature>
<feature type="sequence variant" id="VAR_083905" description="In a colon adenocarcinoma sample; somatic mutation; reduced ability to induce pyroptosis." evidence="12">
    <original>N</original>
    <variation>D</variation>
    <location>
        <position position="24"/>
    </location>
</feature>
<feature type="sequence variant" id="VAR_083906" description="In a lung cancer adenocarcinoma sample; somatic mutation; reduced ability to induce pyroptosis." evidence="12">
    <original>W</original>
    <variation>C</variation>
    <location>
        <position position="44"/>
    </location>
</feature>
<feature type="sequence variant" id="VAR_083907" description="In an uterine corpus endometrioid carcinoma sample; somatic mutation; reduced ability to induce pyroptosis." evidence="12">
    <original>R</original>
    <variation>I</variation>
    <location>
        <position position="48"/>
    </location>
</feature>
<feature type="sequence variant" id="VAR_083908" description="In an uterine corpus endometrioid carcinoma sample; somatic mutation; reduced ability to induce pyroptosis." evidence="12">
    <original>I</original>
    <variation>T</variation>
    <location>
        <position position="137"/>
    </location>
</feature>
<feature type="sequence variant" id="VAR_030824" description="In dbSNP:rs754554." evidence="2">
    <original>P</original>
    <variation>T</variation>
    <location>
        <position position="142"/>
    </location>
</feature>
<feature type="sequence variant" id="VAR_053102" description="In dbSNP:rs876306.">
    <original>M</original>
    <variation>T</variation>
    <location>
        <position position="174"/>
    </location>
</feature>
<feature type="sequence variant" id="VAR_083909" description="In an uterine corpus endometrioid carcinoma sample; somatic mutation; reduced ability to induce pyroptosis." evidence="12">
    <original>G</original>
    <variation>E</variation>
    <location>
        <position position="199"/>
    </location>
</feature>
<feature type="sequence variant" id="VAR_030825" description="In dbSNP:rs12540919.">
    <original>V</original>
    <variation>M</variation>
    <location>
        <position position="207"/>
    </location>
</feature>
<feature type="sequence variant" id="VAR_083910" description="In a melanoma sample; somatic mutation; reduced ability to induce pyroptosis." evidence="12">
    <original>P</original>
    <variation>L</variation>
    <location>
        <position position="212"/>
    </location>
</feature>
<feature type="sequence variant" id="VAR_083911" description="In a lung cancer adenocarcinoma sample; somatic mutation; reduced ability to induce pyroptosis." evidence="12">
    <original>I</original>
    <variation>N</variation>
    <location>
        <position position="217"/>
    </location>
</feature>
<feature type="mutagenesis site" description="No effect on plasma membrane targeting. Decreases induction of necrotic activity. Disrupts plasma membrane targeting and induction of necrotic activity; when associated with A-40." evidence="9 12">
    <original>F</original>
    <variation>A</variation>
    <location>
        <position position="2"/>
    </location>
</feature>
<feature type="mutagenesis site" description="Disrupts plasma membrane targeting and induction of necrotic activity; when associated with A-40 and/or A-41." evidence="9">
    <original>K</original>
    <variation>A</variation>
    <location>
        <position position="39"/>
    </location>
</feature>
<feature type="mutagenesis site" description="No effect on plasma membrane targeting. No effect on induction of cytotoxivity. Disrupts plasma membrane targeting and induction of necrotic activity; when associated with A-2 or A-39 and A-41." evidence="9">
    <original>K</original>
    <variation>A</variation>
    <location>
        <position position="40"/>
    </location>
</feature>
<feature type="mutagenesis site" description="Disrupts plasma membrane targeting and induction of necrotic activity; when associated with A-39 and/or A-41." evidence="9">
    <original>K</original>
    <variation>A</variation>
    <location>
        <position position="41"/>
    </location>
</feature>
<feature type="mutagenesis site" description="Abolishes cleavage by CASP3. Abolishes pyroptosis induction." evidence="10">
    <original>D</original>
    <variation>A</variation>
    <location>
        <position position="267"/>
    </location>
</feature>
<feature type="mutagenesis site" description="Abolishes cleavage by CASP3 or granzyme B. Abolishes pyroptosis induction." evidence="9 10 12 14">
    <original>D</original>
    <variation>A</variation>
    <variation>E</variation>
    <location>
        <position position="270"/>
    </location>
</feature>
<feature type="mutagenesis site" description="No spontaneous pyroptosis-inducing activity." evidence="8">
    <original>I</original>
    <variation>D</variation>
    <location>
        <position position="313"/>
    </location>
</feature>
<feature type="mutagenesis site" description="Low spontaneous pyroptosis-inducing activity." evidence="8">
    <original>F</original>
    <variation>D</variation>
    <location>
        <position position="388"/>
    </location>
</feature>
<feature type="mutagenesis site" description="Low spontaneous pyroptosis-inducing activity." evidence="8">
    <original>A</original>
    <variation>D</variation>
    <location>
        <position position="392"/>
    </location>
</feature>
<gene>
    <name evidence="22 30" type="primary">GSDME</name>
    <name evidence="24" type="synonym">DFNA5</name>
    <name evidence="23" type="synonym">ICERE1</name>
</gene>
<organism>
    <name type="scientific">Homo sapiens</name>
    <name type="common">Human</name>
    <dbReference type="NCBI Taxonomy" id="9606"/>
    <lineage>
        <taxon>Eukaryota</taxon>
        <taxon>Metazoa</taxon>
        <taxon>Chordata</taxon>
        <taxon>Craniata</taxon>
        <taxon>Vertebrata</taxon>
        <taxon>Euteleostomi</taxon>
        <taxon>Mammalia</taxon>
        <taxon>Eutheria</taxon>
        <taxon>Euarchontoglires</taxon>
        <taxon>Primates</taxon>
        <taxon>Haplorrhini</taxon>
        <taxon>Catarrhini</taxon>
        <taxon>Hominidae</taxon>
        <taxon>Homo</taxon>
    </lineage>
</organism>
<comment type="function">
    <molecule>Gasdermin-E</molecule>
    <text evidence="8 10 14 15 17">Precursor of a pore-forming protein that converts non-inflammatory apoptosis to pyroptosis (PubMed:27281216, PubMed:28459430, PubMed:33852854, PubMed:35594856, PubMed:36607699). This form constitutes the precursor of the pore-forming protein: upon cleavage, the released N-terminal moiety (Gasdermin-E, N-terminal) binds to membranes and forms pores, triggering pyroptosis (PubMed:28459430).</text>
</comment>
<comment type="function">
    <molecule>Gasdermin-E, N-terminal</molecule>
    <text evidence="3 5 8 9 10 11 12 14 15">Pore-forming protein produced by cleavage by CASP3 or granzyme B (GZMB), which converts non-inflammatory apoptosis to pyroptosis or promotes granzyme-mediated pyroptosis, respectively (PubMed:27281216, PubMed:28459430, PubMed:32188940, PubMed:33852854, PubMed:35594856). After cleavage, moves to the plasma membrane, homooligomerizes within the membrane and forms pores of 10-15 nanometers (nm) of inner diameter, allowing the release of mature interleukins (IL1B and IL16) and triggering pyroptosis (PubMed:28459430, PubMed:32188940, PubMed:33852854, PubMed:35594856). Binds to inner leaflet lipids, bisphosphorylated phosphatidylinositols, such as phosphatidylinositol (4,5)-bisphosphate (PubMed:28459430). Cleavage by CASP3 switches CASP3-mediated apoptosis induced by TNF or danger signals, such as chemotherapy drugs, to pyroptosis (PubMed:27281216, PubMed:28459430, PubMed:32188940). Mediates secondary necrosis downstream of the mitochondrial apoptotic pathway and CASP3 activation as well as in response to viral agents (PubMed:28045099). Exhibits bactericidal activity (PubMed:27281216). Cleavage by GZMB promotes tumor suppressor activity by triggering robust anti-tumor immunity (PubMed:21522185, PubMed:32188940). Suppresses tumors by mediating granzyme-mediated pyroptosis in target cells of natural killer (NK) cells: cleavage by granzyme B (GZMB), delivered to target cells from NK-cells, triggers pyroptosis of tumor cells and tumor suppression (PubMed:31953257, PubMed:32188940). May play a role in the p53/TP53-regulated cellular response to DNA damage (PubMed:16897187).</text>
</comment>
<comment type="function">
    <molecule>Gasdermin-E, N-terminal</molecule>
    <text evidence="16">(Microbial infection) Pore-forming protein, which promotes maternal placental pyroptosis in response to Zika virus infection, contributing to adverse fetal outcomes.</text>
</comment>
<comment type="activity regulation">
    <molecule>Gasdermin-E</molecule>
    <text evidence="9 10 11 12 14 15">The full-length protein before cleavage is inactive: intramolecular interactions between N- and C-terminal domains mediate autoinhibition in the absence of activation signal (PubMed:28045099, PubMed:28459430). The intrinsic pyroptosis-inducing activity is carried by the released N-terminal moiety (Gasdermin-E, N-terminal) following cleavage by CASP3 or granzyme B (GZMB) (PubMed:28459430, PubMed:31953257, PubMed:32188940, PubMed:35594856). Activated by NLRP1 in the absence of GSDMD expression: NLRP1 cleaves and activates CASP8, promoting downstream activation of CASP3 and subsequent activation of GSDME (PubMed:33852854, PubMed:35594856).</text>
</comment>
<comment type="activity regulation">
    <text evidence="15">(Microbial infection) Activated upon human coronavirus SARS-CoV-2 infection, leading to lung epithelial cell death (PubMed:35594856). Activation takes place in response to (1) activation of NLRP1 and (2) inactivation of GSDMD following NLRP1 and GSDMD cleavage by the SARS-CoV-2 3C-like proteinase nsp5 (PubMed:35594856).</text>
</comment>
<comment type="subunit">
    <molecule>Gasdermin-E, N-terminal</molecule>
    <text evidence="1">Homooligomer; homooligomeric ring-shaped pore complex containing 27-28 subunits when inserted in the membrane.</text>
</comment>
<comment type="interaction">
    <interactant intactId="EBI-719315">
        <id>O60443</id>
    </interactant>
    <interactant intactId="EBI-740711">
        <id>Q96CG3</id>
        <label>TIFA</label>
    </interactant>
    <organismsDiffer>false</organismsDiffer>
    <experiments>3</experiments>
</comment>
<comment type="subcellular location">
    <molecule>Gasdermin-E, N-terminal</molecule>
    <subcellularLocation>
        <location evidence="9 10">Cell membrane</location>
        <topology evidence="1">Multi-pass membrane protein</topology>
    </subcellularLocation>
</comment>
<comment type="subcellular location">
    <molecule>Gasdermin-E</molecule>
    <subcellularLocation>
        <location evidence="9">Cytoplasm</location>
        <location evidence="9">Cytosol</location>
    </subcellularLocation>
</comment>
<comment type="alternative products">
    <event type="alternative splicing"/>
    <isoform>
        <id>O60443-1</id>
        <name>1</name>
        <name>Long</name>
        <sequence type="displayed"/>
    </isoform>
    <isoform>
        <id>O60443-2</id>
        <name>2</name>
        <name>Short</name>
        <sequence type="described" ref="VSP_004190"/>
    </isoform>
    <isoform>
        <id>O60443-3</id>
        <name>3</name>
        <sequence type="described" ref="VSP_044276"/>
    </isoform>
</comment>
<comment type="tissue specificity">
    <text evidence="19">Expressed in cochlea (PubMed:9771715). Low level of expression in heart, brain, placenta, lung, liver, skeletal muscle, kidney and pancreas, with highest expression in placenta (PubMed:9771715).</text>
</comment>
<comment type="domain">
    <text evidence="9 10 12">Intramolecular interactions between N- and C-terminal domains may be important for autoinhibition in the absence of activation signal. The intrinsic pyroptosis-inducing activity is carried by the N-terminal domain, that is released upon cleavage by CASP3 or granzyme B (GZMB).</text>
</comment>
<comment type="PTM">
    <text evidence="9 10 11 12">Cleavage at Asp-270 by CASP3 (mature and uncleaved precursor forms) or granzyme B (GZMB) relieves autoinhibition and is sufficient to initiate pyroptosis.</text>
</comment>
<comment type="PTM">
    <molecule>Gasdermin-E</molecule>
    <text evidence="13">Succination by the Krebs cycle intermediate fumarate, which leads to S-(2-succinyl)cysteine residues, inhibits processing by caspases, and ability to initiate pyroptosis (PubMed:32820063). Succination modification is catalyzed by a non-enzymatic reaction caused by an accumulation of fumarate (PubMed:32820063).</text>
</comment>
<comment type="PTM">
    <molecule>Gasdermin-E</molecule>
    <text evidence="17">Ubiquitinated at Lys-120 and Lys-189 via 'Lys-48'-linked polyubiquitin chains, leading to proteasomal degradation. Deubiquitinated by USP48, leading to increased stability.</text>
</comment>
<comment type="PTM">
    <text evidence="18">Palmitoylated.</text>
</comment>
<comment type="disease" evidence="4 6 7 19">
    <disease id="DI-00837">
        <name>Deafness, autosomal dominant, 5</name>
        <acronym>DFNA5</acronym>
        <description>A form of non-syndromic sensorineural hearing loss. Sensorineural deafness results from damage to the neural receptors of the inner ear, the nerve pathways to the brain, or the area of the brain that receives sound information.</description>
        <dbReference type="MIM" id="600994"/>
    </disease>
    <text>The disease is caused by variants affecting the gene represented in this entry.</text>
</comment>
<comment type="disease">
    <text evidence="21">Is a tumor suppressor gene with an important role in colorectal cancer (CRC).</text>
</comment>
<comment type="similarity">
    <text evidence="27">Belongs to the gasdermin family.</text>
</comment>
<comment type="sequence caution" evidence="27">
    <conflict type="erroneous gene model prediction">
        <sequence resource="EMBL-CDS" id="AAB83938"/>
    </conflict>
</comment>
<comment type="sequence caution" evidence="27">
    <conflict type="erroneous initiation">
        <sequence resource="EMBL-CDS" id="AAC39635"/>
    </conflict>
    <text>Truncated N-terminus.</text>
</comment>
<proteinExistence type="evidence at protein level"/>
<keyword id="KW-0025">Alternative splicing</keyword>
<keyword id="KW-1003">Cell membrane</keyword>
<keyword id="KW-0963">Cytoplasm</keyword>
<keyword id="KW-0209">Deafness</keyword>
<keyword id="KW-1017">Isopeptide bond</keyword>
<keyword id="KW-0449">Lipoprotein</keyword>
<keyword id="KW-0472">Membrane</keyword>
<keyword id="KW-1210">Necrosis</keyword>
<keyword id="KW-1010">Non-syndromic deafness</keyword>
<keyword id="KW-0564">Palmitate</keyword>
<keyword id="KW-1267">Proteomics identification</keyword>
<keyword id="KW-1185">Reference proteome</keyword>
<keyword id="KW-0812">Transmembrane</keyword>
<keyword id="KW-1134">Transmembrane beta strand</keyword>
<keyword id="KW-0043">Tumor suppressor</keyword>
<keyword id="KW-0832">Ubl conjugation</keyword>
<name>GSDME_HUMAN</name>
<evidence type="ECO:0000250" key="1">
    <source>
        <dbReference type="UniProtKB" id="Q5Y4Y6"/>
    </source>
</evidence>
<evidence type="ECO:0000269" key="2">
    <source>
    </source>
</evidence>
<evidence type="ECO:0000269" key="3">
    <source>
    </source>
</evidence>
<evidence type="ECO:0000269" key="4">
    <source>
    </source>
</evidence>
<evidence type="ECO:0000269" key="5">
    <source>
    </source>
</evidence>
<evidence type="ECO:0000269" key="6">
    <source>
    </source>
</evidence>
<evidence type="ECO:0000269" key="7">
    <source>
    </source>
</evidence>
<evidence type="ECO:0000269" key="8">
    <source>
    </source>
</evidence>
<evidence type="ECO:0000269" key="9">
    <source>
    </source>
</evidence>
<evidence type="ECO:0000269" key="10">
    <source>
    </source>
</evidence>
<evidence type="ECO:0000269" key="11">
    <source>
    </source>
</evidence>
<evidence type="ECO:0000269" key="12">
    <source>
    </source>
</evidence>
<evidence type="ECO:0000269" key="13">
    <source>
    </source>
</evidence>
<evidence type="ECO:0000269" key="14">
    <source>
    </source>
</evidence>
<evidence type="ECO:0000269" key="15">
    <source>
    </source>
</evidence>
<evidence type="ECO:0000269" key="16">
    <source>
    </source>
</evidence>
<evidence type="ECO:0000269" key="17">
    <source>
    </source>
</evidence>
<evidence type="ECO:0000269" key="18">
    <source>
    </source>
</evidence>
<evidence type="ECO:0000269" key="19">
    <source>
    </source>
</evidence>
<evidence type="ECO:0000303" key="20">
    <source>
    </source>
</evidence>
<evidence type="ECO:0000303" key="21">
    <source>
    </source>
</evidence>
<evidence type="ECO:0000303" key="22">
    <source>
    </source>
</evidence>
<evidence type="ECO:0000303" key="23">
    <source>
    </source>
</evidence>
<evidence type="ECO:0000303" key="24">
    <source>
    </source>
</evidence>
<evidence type="ECO:0000303" key="25">
    <source ref="2"/>
</evidence>
<evidence type="ECO:0000303" key="26">
    <source ref="3"/>
</evidence>
<evidence type="ECO:0000305" key="27"/>
<evidence type="ECO:0000305" key="28">
    <source>
    </source>
</evidence>
<evidence type="ECO:0000305" key="29">
    <source>
    </source>
</evidence>
<evidence type="ECO:0000312" key="30">
    <source>
        <dbReference type="HGNC" id="HGNC:2810"/>
    </source>
</evidence>
<reference key="1">
    <citation type="journal article" date="1998" name="Nat. Genet.">
        <title>Nonsyndromic hearing impairment is associated with a mutation in DFNA5.</title>
        <authorList>
            <person name="Van Laer L."/>
            <person name="Huizing E.H."/>
            <person name="Verstreken M."/>
            <person name="van Zuijlen D."/>
            <person name="Wauters J.G."/>
            <person name="Bossuyt P.J."/>
            <person name="Van de Heyning P."/>
            <person name="McGuirt W.T."/>
            <person name="Smith R.J.H."/>
            <person name="Willems P.J."/>
            <person name="Legan P.K."/>
            <person name="Richardson G.P."/>
            <person name="Van Camp G."/>
        </authorList>
    </citation>
    <scope>NUCLEOTIDE SEQUENCE [MRNA] (ISOFORM 1)</scope>
    <scope>TISSUE SPECIFICITY</scope>
    <scope>INVOLVEMENT IN DFNA5</scope>
    <source>
        <tissue>Cochlea</tissue>
    </source>
</reference>
<reference key="2">
    <citation type="submission" date="1998-06" db="EMBL/GenBank/DDBJ databases">
        <authorList>
            <person name="Van Laer L."/>
            <person name="Van Camp G."/>
        </authorList>
    </citation>
    <scope>NUCLEOTIDE SEQUENCE [MRNA] (ISOFORM 2)</scope>
</reference>
<reference key="3">
    <citation type="submission" date="1999-02" db="EMBL/GenBank/DDBJ databases">
        <authorList>
            <person name="Mei G."/>
            <person name="Yu W."/>
            <person name="Gibbs R.A."/>
        </authorList>
    </citation>
    <scope>NUCLEOTIDE SEQUENCE [LARGE SCALE MRNA] (ISOFORM 2)</scope>
    <source>
        <tissue>Brain</tissue>
    </source>
</reference>
<reference key="4">
    <citation type="journal article" date="2004" name="Nat. Genet.">
        <title>Complete sequencing and characterization of 21,243 full-length human cDNAs.</title>
        <authorList>
            <person name="Ota T."/>
            <person name="Suzuki Y."/>
            <person name="Nishikawa T."/>
            <person name="Otsuki T."/>
            <person name="Sugiyama T."/>
            <person name="Irie R."/>
            <person name="Wakamatsu A."/>
            <person name="Hayashi K."/>
            <person name="Sato H."/>
            <person name="Nagai K."/>
            <person name="Kimura K."/>
            <person name="Makita H."/>
            <person name="Sekine M."/>
            <person name="Obayashi M."/>
            <person name="Nishi T."/>
            <person name="Shibahara T."/>
            <person name="Tanaka T."/>
            <person name="Ishii S."/>
            <person name="Yamamoto J."/>
            <person name="Saito K."/>
            <person name="Kawai Y."/>
            <person name="Isono Y."/>
            <person name="Nakamura Y."/>
            <person name="Nagahari K."/>
            <person name="Murakami K."/>
            <person name="Yasuda T."/>
            <person name="Iwayanagi T."/>
            <person name="Wagatsuma M."/>
            <person name="Shiratori A."/>
            <person name="Sudo H."/>
            <person name="Hosoiri T."/>
            <person name="Kaku Y."/>
            <person name="Kodaira H."/>
            <person name="Kondo H."/>
            <person name="Sugawara M."/>
            <person name="Takahashi M."/>
            <person name="Kanda K."/>
            <person name="Yokoi T."/>
            <person name="Furuya T."/>
            <person name="Kikkawa E."/>
            <person name="Omura Y."/>
            <person name="Abe K."/>
            <person name="Kamihara K."/>
            <person name="Katsuta N."/>
            <person name="Sato K."/>
            <person name="Tanikawa M."/>
            <person name="Yamazaki M."/>
            <person name="Ninomiya K."/>
            <person name="Ishibashi T."/>
            <person name="Yamashita H."/>
            <person name="Murakawa K."/>
            <person name="Fujimori K."/>
            <person name="Tanai H."/>
            <person name="Kimata M."/>
            <person name="Watanabe M."/>
            <person name="Hiraoka S."/>
            <person name="Chiba Y."/>
            <person name="Ishida S."/>
            <person name="Ono Y."/>
            <person name="Takiguchi S."/>
            <person name="Watanabe S."/>
            <person name="Yosida M."/>
            <person name="Hotuta T."/>
            <person name="Kusano J."/>
            <person name="Kanehori K."/>
            <person name="Takahashi-Fujii A."/>
            <person name="Hara H."/>
            <person name="Tanase T.-O."/>
            <person name="Nomura Y."/>
            <person name="Togiya S."/>
            <person name="Komai F."/>
            <person name="Hara R."/>
            <person name="Takeuchi K."/>
            <person name="Arita M."/>
            <person name="Imose N."/>
            <person name="Musashino K."/>
            <person name="Yuuki H."/>
            <person name="Oshima A."/>
            <person name="Sasaki N."/>
            <person name="Aotsuka S."/>
            <person name="Yoshikawa Y."/>
            <person name="Matsunawa H."/>
            <person name="Ichihara T."/>
            <person name="Shiohata N."/>
            <person name="Sano S."/>
            <person name="Moriya S."/>
            <person name="Momiyama H."/>
            <person name="Satoh N."/>
            <person name="Takami S."/>
            <person name="Terashima Y."/>
            <person name="Suzuki O."/>
            <person name="Nakagawa S."/>
            <person name="Senoh A."/>
            <person name="Mizoguchi H."/>
            <person name="Goto Y."/>
            <person name="Shimizu F."/>
            <person name="Wakebe H."/>
            <person name="Hishigaki H."/>
            <person name="Watanabe T."/>
            <person name="Sugiyama A."/>
            <person name="Takemoto M."/>
            <person name="Kawakami B."/>
            <person name="Yamazaki M."/>
            <person name="Watanabe K."/>
            <person name="Kumagai A."/>
            <person name="Itakura S."/>
            <person name="Fukuzumi Y."/>
            <person name="Fujimori Y."/>
            <person name="Komiyama M."/>
            <person name="Tashiro H."/>
            <person name="Tanigami A."/>
            <person name="Fujiwara T."/>
            <person name="Ono T."/>
            <person name="Yamada K."/>
            <person name="Fujii Y."/>
            <person name="Ozaki K."/>
            <person name="Hirao M."/>
            <person name="Ohmori Y."/>
            <person name="Kawabata A."/>
            <person name="Hikiji T."/>
            <person name="Kobatake N."/>
            <person name="Inagaki H."/>
            <person name="Ikema Y."/>
            <person name="Okamoto S."/>
            <person name="Okitani R."/>
            <person name="Kawakami T."/>
            <person name="Noguchi S."/>
            <person name="Itoh T."/>
            <person name="Shigeta K."/>
            <person name="Senba T."/>
            <person name="Matsumura K."/>
            <person name="Nakajima Y."/>
            <person name="Mizuno T."/>
            <person name="Morinaga M."/>
            <person name="Sasaki M."/>
            <person name="Togashi T."/>
            <person name="Oyama M."/>
            <person name="Hata H."/>
            <person name="Watanabe M."/>
            <person name="Komatsu T."/>
            <person name="Mizushima-Sugano J."/>
            <person name="Satoh T."/>
            <person name="Shirai Y."/>
            <person name="Takahashi Y."/>
            <person name="Nakagawa K."/>
            <person name="Okumura K."/>
            <person name="Nagase T."/>
            <person name="Nomura N."/>
            <person name="Kikuchi H."/>
            <person name="Masuho Y."/>
            <person name="Yamashita R."/>
            <person name="Nakai K."/>
            <person name="Yada T."/>
            <person name="Nakamura Y."/>
            <person name="Ohara O."/>
            <person name="Isogai T."/>
            <person name="Sugano S."/>
        </authorList>
    </citation>
    <scope>NUCLEOTIDE SEQUENCE [LARGE SCALE MRNA] (ISOFORMS 1 AND 3)</scope>
    <source>
        <tissue>Amygdala</tissue>
    </source>
</reference>
<reference key="5">
    <citation type="journal article" date="2003" name="Nature">
        <title>The DNA sequence of human chromosome 7.</title>
        <authorList>
            <person name="Hillier L.W."/>
            <person name="Fulton R.S."/>
            <person name="Fulton L.A."/>
            <person name="Graves T.A."/>
            <person name="Pepin K.H."/>
            <person name="Wagner-McPherson C."/>
            <person name="Layman D."/>
            <person name="Maas J."/>
            <person name="Jaeger S."/>
            <person name="Walker R."/>
            <person name="Wylie K."/>
            <person name="Sekhon M."/>
            <person name="Becker M.C."/>
            <person name="O'Laughlin M.D."/>
            <person name="Schaller M.E."/>
            <person name="Fewell G.A."/>
            <person name="Delehaunty K.D."/>
            <person name="Miner T.L."/>
            <person name="Nash W.E."/>
            <person name="Cordes M."/>
            <person name="Du H."/>
            <person name="Sun H."/>
            <person name="Edwards J."/>
            <person name="Bradshaw-Cordum H."/>
            <person name="Ali J."/>
            <person name="Andrews S."/>
            <person name="Isak A."/>
            <person name="Vanbrunt A."/>
            <person name="Nguyen C."/>
            <person name="Du F."/>
            <person name="Lamar B."/>
            <person name="Courtney L."/>
            <person name="Kalicki J."/>
            <person name="Ozersky P."/>
            <person name="Bielicki L."/>
            <person name="Scott K."/>
            <person name="Holmes A."/>
            <person name="Harkins R."/>
            <person name="Harris A."/>
            <person name="Strong C.M."/>
            <person name="Hou S."/>
            <person name="Tomlinson C."/>
            <person name="Dauphin-Kohlberg S."/>
            <person name="Kozlowicz-Reilly A."/>
            <person name="Leonard S."/>
            <person name="Rohlfing T."/>
            <person name="Rock S.M."/>
            <person name="Tin-Wollam A.-M."/>
            <person name="Abbott A."/>
            <person name="Minx P."/>
            <person name="Maupin R."/>
            <person name="Strowmatt C."/>
            <person name="Latreille P."/>
            <person name="Miller N."/>
            <person name="Johnson D."/>
            <person name="Murray J."/>
            <person name="Woessner J.P."/>
            <person name="Wendl M.C."/>
            <person name="Yang S.-P."/>
            <person name="Schultz B.R."/>
            <person name="Wallis J.W."/>
            <person name="Spieth J."/>
            <person name="Bieri T.A."/>
            <person name="Nelson J.O."/>
            <person name="Berkowicz N."/>
            <person name="Wohldmann P.E."/>
            <person name="Cook L.L."/>
            <person name="Hickenbotham M.T."/>
            <person name="Eldred J."/>
            <person name="Williams D."/>
            <person name="Bedell J.A."/>
            <person name="Mardis E.R."/>
            <person name="Clifton S.W."/>
            <person name="Chissoe S.L."/>
            <person name="Marra M.A."/>
            <person name="Raymond C."/>
            <person name="Haugen E."/>
            <person name="Gillett W."/>
            <person name="Zhou Y."/>
            <person name="James R."/>
            <person name="Phelps K."/>
            <person name="Iadanoto S."/>
            <person name="Bubb K."/>
            <person name="Simms E."/>
            <person name="Levy R."/>
            <person name="Clendenning J."/>
            <person name="Kaul R."/>
            <person name="Kent W.J."/>
            <person name="Furey T.S."/>
            <person name="Baertsch R.A."/>
            <person name="Brent M.R."/>
            <person name="Keibler E."/>
            <person name="Flicek P."/>
            <person name="Bork P."/>
            <person name="Suyama M."/>
            <person name="Bailey J.A."/>
            <person name="Portnoy M.E."/>
            <person name="Torrents D."/>
            <person name="Chinwalla A.T."/>
            <person name="Gish W.R."/>
            <person name="Eddy S.R."/>
            <person name="McPherson J.D."/>
            <person name="Olson M.V."/>
            <person name="Eichler E.E."/>
            <person name="Green E.D."/>
            <person name="Waterston R.H."/>
            <person name="Wilson R.K."/>
        </authorList>
    </citation>
    <scope>NUCLEOTIDE SEQUENCE [LARGE SCALE GENOMIC DNA]</scope>
</reference>
<reference key="6">
    <citation type="submission" date="2005-07" db="EMBL/GenBank/DDBJ databases">
        <authorList>
            <person name="Mural R.J."/>
            <person name="Istrail S."/>
            <person name="Sutton G."/>
            <person name="Florea L."/>
            <person name="Halpern A.L."/>
            <person name="Mobarry C.M."/>
            <person name="Lippert R."/>
            <person name="Walenz B."/>
            <person name="Shatkay H."/>
            <person name="Dew I."/>
            <person name="Miller J.R."/>
            <person name="Flanigan M.J."/>
            <person name="Edwards N.J."/>
            <person name="Bolanos R."/>
            <person name="Fasulo D."/>
            <person name="Halldorsson B.V."/>
            <person name="Hannenhalli S."/>
            <person name="Turner R."/>
            <person name="Yooseph S."/>
            <person name="Lu F."/>
            <person name="Nusskern D.R."/>
            <person name="Shue B.C."/>
            <person name="Zheng X.H."/>
            <person name="Zhong F."/>
            <person name="Delcher A.L."/>
            <person name="Huson D.H."/>
            <person name="Kravitz S.A."/>
            <person name="Mouchard L."/>
            <person name="Reinert K."/>
            <person name="Remington K.A."/>
            <person name="Clark A.G."/>
            <person name="Waterman M.S."/>
            <person name="Eichler E.E."/>
            <person name="Adams M.D."/>
            <person name="Hunkapiller M.W."/>
            <person name="Myers E.W."/>
            <person name="Venter J.C."/>
        </authorList>
    </citation>
    <scope>NUCLEOTIDE SEQUENCE [LARGE SCALE GENOMIC DNA]</scope>
</reference>
<reference key="7">
    <citation type="journal article" date="2003" name="Science">
        <title>Human chromosome 7: DNA sequence and biology.</title>
        <authorList>
            <person name="Scherer S.W."/>
            <person name="Cheung J."/>
            <person name="MacDonald J.R."/>
            <person name="Osborne L.R."/>
            <person name="Nakabayashi K."/>
            <person name="Herbrick J.-A."/>
            <person name="Carson A.R."/>
            <person name="Parker-Katiraee L."/>
            <person name="Skaug J."/>
            <person name="Khaja R."/>
            <person name="Zhang J."/>
            <person name="Hudek A.K."/>
            <person name="Li M."/>
            <person name="Haddad M."/>
            <person name="Duggan G.E."/>
            <person name="Fernandez B.A."/>
            <person name="Kanematsu E."/>
            <person name="Gentles S."/>
            <person name="Christopoulos C.C."/>
            <person name="Choufani S."/>
            <person name="Kwasnicka D."/>
            <person name="Zheng X.H."/>
            <person name="Lai Z."/>
            <person name="Nusskern D.R."/>
            <person name="Zhang Q."/>
            <person name="Gu Z."/>
            <person name="Lu F."/>
            <person name="Zeesman S."/>
            <person name="Nowaczyk M.J."/>
            <person name="Teshima I."/>
            <person name="Chitayat D."/>
            <person name="Shuman C."/>
            <person name="Weksberg R."/>
            <person name="Zackai E.H."/>
            <person name="Grebe T.A."/>
            <person name="Cox S.R."/>
            <person name="Kirkpatrick S.J."/>
            <person name="Rahman N."/>
            <person name="Friedman J.M."/>
            <person name="Heng H.H.Q."/>
            <person name="Pelicci P.G."/>
            <person name="Lo-Coco F."/>
            <person name="Belloni E."/>
            <person name="Shaffer L.G."/>
            <person name="Pober B."/>
            <person name="Morton C.C."/>
            <person name="Gusella J.F."/>
            <person name="Bruns G.A.P."/>
            <person name="Korf B.R."/>
            <person name="Quade B.J."/>
            <person name="Ligon A.H."/>
            <person name="Ferguson H."/>
            <person name="Higgins A.W."/>
            <person name="Leach N.T."/>
            <person name="Herrick S.R."/>
            <person name="Lemyre E."/>
            <person name="Farra C.G."/>
            <person name="Kim H.-G."/>
            <person name="Summers A.M."/>
            <person name="Gripp K.W."/>
            <person name="Roberts W."/>
            <person name="Szatmari P."/>
            <person name="Winsor E.J.T."/>
            <person name="Grzeschik K.-H."/>
            <person name="Teebi A."/>
            <person name="Minassian B.A."/>
            <person name="Kere J."/>
            <person name="Armengol L."/>
            <person name="Pujana M.A."/>
            <person name="Estivill X."/>
            <person name="Wilson M.D."/>
            <person name="Koop B.F."/>
            <person name="Tosi S."/>
            <person name="Moore G.E."/>
            <person name="Boright A.P."/>
            <person name="Zlotorynski E."/>
            <person name="Kerem B."/>
            <person name="Kroisel P.M."/>
            <person name="Petek E."/>
            <person name="Oscier D.G."/>
            <person name="Mould S.J."/>
            <person name="Doehner H."/>
            <person name="Doehner K."/>
            <person name="Rommens J.M."/>
            <person name="Vincent J.B."/>
            <person name="Venter J.C."/>
            <person name="Li P.W."/>
            <person name="Mural R.J."/>
            <person name="Adams M.D."/>
            <person name="Tsui L.-C."/>
        </authorList>
    </citation>
    <scope>NUCLEOTIDE SEQUENCE [LARGE SCALE GENOMIC DNA]</scope>
    <scope>VARIANT THR-142</scope>
</reference>
<reference key="8">
    <citation type="journal article" date="2004" name="Genome Res.">
        <title>The status, quality, and expansion of the NIH full-length cDNA project: the Mammalian Gene Collection (MGC).</title>
        <authorList>
            <consortium name="The MGC Project Team"/>
        </authorList>
    </citation>
    <scope>NUCLEOTIDE SEQUENCE [LARGE SCALE MRNA] (ISOFORM 1)</scope>
</reference>
<reference key="9">
    <citation type="journal article" date="1998" name="Eur. J. Biochem.">
        <title>Characterization of a gene that is inversely correlated with estrogen receptor expression (ICERE-1) in breast carcinomas.</title>
        <authorList>
            <person name="Thompson D.A."/>
            <person name="Weigel R.J."/>
        </authorList>
    </citation>
    <scope>NUCLEOTIDE SEQUENCE [MRNA] OF 5-496 (ISOFORM 1)</scope>
    <source>
        <tissue>Mammary gland</tissue>
    </source>
</reference>
<reference key="10">
    <citation type="submission" date="1999-08" db="EMBL/GenBank/DDBJ databases">
        <authorList>
            <person name="Thompson D.A."/>
        </authorList>
    </citation>
    <scope>SEQUENCE REVISION TO C-TERMINUS</scope>
</reference>
<reference key="11">
    <citation type="journal article" date="2006" name="J. Hum. Genet.">
        <title>The potential role of DFNA5, a hearing impairment gene, in p53-mediated cellular response to DNA damage.</title>
        <authorList>
            <person name="Masuda Y."/>
            <person name="Futamura M."/>
            <person name="Kamino H."/>
            <person name="Nakamura Y."/>
            <person name="Kitamura N."/>
            <person name="Ohnishi S."/>
            <person name="Miyamoto Y."/>
            <person name="Ichikawa H."/>
            <person name="Ohta T."/>
            <person name="Ohki M."/>
            <person name="Kiyono T."/>
            <person name="Egami H."/>
            <person name="Baba H."/>
            <person name="Arakawa H."/>
        </authorList>
    </citation>
    <scope>FUNCTION IN TP53-MEDIATED CELLULAR RESPONSE</scope>
</reference>
<reference key="12">
    <citation type="journal article" date="2008" name="Oncogene">
        <title>Aberrant promoter methylation and tumor suppressive activity of the DFNA5 gene in colorectal carcinoma.</title>
        <authorList>
            <person name="Kim M.S."/>
            <person name="Chang X."/>
            <person name="Yamashita K."/>
            <person name="Nagpal J.K."/>
            <person name="Baek J.H."/>
            <person name="Wu G."/>
            <person name="Trink B."/>
            <person name="Ratovitski E.A."/>
            <person name="Mori M."/>
            <person name="Sidransky D."/>
        </authorList>
    </citation>
    <scope>INVOLVEMENT IN CRC</scope>
</reference>
<reference key="13">
    <citation type="journal article" date="2009" name="Sci. Signal.">
        <title>Quantitative phosphoproteomic analysis of T cell receptor signaling reveals system-wide modulation of protein-protein interactions.</title>
        <authorList>
            <person name="Mayya V."/>
            <person name="Lundgren D.H."/>
            <person name="Hwang S.-I."/>
            <person name="Rezaul K."/>
            <person name="Wu L."/>
            <person name="Eng J.K."/>
            <person name="Rodionov V."/>
            <person name="Han D.K."/>
        </authorList>
    </citation>
    <scope>IDENTIFICATION BY MASS SPECTROMETRY [LARGE SCALE ANALYSIS]</scope>
    <source>
        <tissue>Leukemic T-cell</tissue>
    </source>
</reference>
<reference key="14">
    <citation type="journal article" date="2011" name="BMC Syst. Biol.">
        <title>Initial characterization of the human central proteome.</title>
        <authorList>
            <person name="Burkard T.R."/>
            <person name="Planyavsky M."/>
            <person name="Kaupe I."/>
            <person name="Breitwieser F.P."/>
            <person name="Buerckstuemmer T."/>
            <person name="Bennett K.L."/>
            <person name="Superti-Furga G."/>
            <person name="Colinge J."/>
        </authorList>
    </citation>
    <scope>IDENTIFICATION BY MASS SPECTROMETRY [LARGE SCALE ANALYSIS]</scope>
</reference>
<reference key="15">
    <citation type="journal article" date="2011" name="Eur. J. Hum. Genet.">
        <title>The DFNA5 gene, responsible for hearing loss and involved in cancer, encodes a novel apoptosis-inducing protein.</title>
        <authorList>
            <person name="Op de Beeck K."/>
            <person name="Van Camp G."/>
            <person name="Thys S."/>
            <person name="Cools N."/>
            <person name="Callebaut I."/>
            <person name="Vrijens K."/>
            <person name="Van Nassauw L."/>
            <person name="Van Tendeloo V.F."/>
            <person name="Timmermans J.P."/>
            <person name="Van Laer L."/>
        </authorList>
    </citation>
    <scope>FUNCTION</scope>
</reference>
<reference key="16">
    <citation type="journal article" date="2012" name="Proc. Natl. Acad. Sci. U.S.A.">
        <title>N-terminal acetylome analyses and functional insights of the N-terminal acetyltransferase NatB.</title>
        <authorList>
            <person name="Van Damme P."/>
            <person name="Lasa M."/>
            <person name="Polevoda B."/>
            <person name="Gazquez C."/>
            <person name="Elosegui-Artola A."/>
            <person name="Kim D.S."/>
            <person name="De Juan-Pardo E."/>
            <person name="Demeyer K."/>
            <person name="Hole K."/>
            <person name="Larrea E."/>
            <person name="Timmerman E."/>
            <person name="Prieto J."/>
            <person name="Arnesen T."/>
            <person name="Sherman F."/>
            <person name="Gevaert K."/>
            <person name="Aldabe R."/>
        </authorList>
    </citation>
    <scope>IDENTIFICATION BY MASS SPECTROMETRY [LARGE SCALE ANALYSIS]</scope>
</reference>
<reference key="17">
    <citation type="journal article" date="2010" name="J. Hum. Genet.">
        <title>Evidence for a founder mutation causing DFNA5 hearing loss in East Asians.</title>
        <authorList>
            <person name="Park H.J."/>
            <person name="Cho H.J."/>
            <person name="Baek J.I."/>
            <person name="Ben-Yosef T."/>
            <person name="Kwon T.J."/>
            <person name="Griffith A.J."/>
            <person name="Kim U.K."/>
        </authorList>
    </citation>
    <scope>INVOLVEMENT IN DFNA5</scope>
</reference>
<reference key="18">
    <citation type="journal article" date="2014" name="Ann. Hum. Genet.">
        <title>A DFNA5 mutation identified in Japanese families with autosomal dominant hereditary hearing loss.</title>
        <authorList>
            <person name="Nishio A."/>
            <person name="Noguchi Y."/>
            <person name="Sato T."/>
            <person name="Naruse T.K."/>
            <person name="Kimura A."/>
            <person name="Takagi A."/>
            <person name="Kitamura K."/>
        </authorList>
    </citation>
    <scope>INVOLVEMENT IN DFNA5</scope>
</reference>
<reference key="19">
    <citation type="journal article" date="2015" name="Front. Cell. Neurosci.">
        <title>The deafness gene DFNA5 induces programmed cell death through mitochondria and MAPK-related pathways.</title>
        <authorList>
            <person name="Van Rossom S."/>
            <person name="Op de Beeck K."/>
            <person name="Hristovska V."/>
            <person name="Winderickx J."/>
            <person name="Van Camp G."/>
        </authorList>
    </citation>
    <scope>INVOLVEMENT IN DFNA5</scope>
</reference>
<reference key="20">
    <citation type="journal article" date="2016" name="Nature">
        <title>Pore-forming activity and structural autoinhibition of the gasdermin family.</title>
        <authorList>
            <person name="Ding J."/>
            <person name="Wang K."/>
            <person name="Liu W."/>
            <person name="She Y."/>
            <person name="Sun Q."/>
            <person name="Shi J."/>
            <person name="Sun H."/>
            <person name="Wang D.C."/>
            <person name="Shao F."/>
        </authorList>
    </citation>
    <scope>FUNCTION</scope>
    <scope>MUTAGENESIS OF ILE-313; PHE-388 AND ALA-392</scope>
</reference>
<reference key="21">
    <citation type="journal article" date="2017" name="Nature">
        <title>Chemotherapy drugs induce pyroptosis through caspase-3 cleavage of a gasdermin.</title>
        <authorList>
            <person name="Wang Y."/>
            <person name="Gao W."/>
            <person name="Shi X."/>
            <person name="Ding J."/>
            <person name="Liu W."/>
            <person name="He H."/>
            <person name="Wang K."/>
            <person name="Shao F."/>
        </authorList>
    </citation>
    <scope>FUNCTION (GASDERMIN-E</scope>
    <scope>N-TERMINAL)</scope>
    <scope>ACTIVITY REGULATION</scope>
    <scope>CLEAVAGE BY CASP3</scope>
    <scope>SUBCELLULAR LOCATION</scope>
    <scope>DOMAIN</scope>
    <scope>MUTAGENESIS OF ASP-267 AND ASP-270</scope>
</reference>
<reference key="22">
    <citation type="journal article" date="2017" name="Nat. Commun.">
        <title>Cleavage of DFNA5 by caspase-3 during apoptosis mediates progression to secondary necrotic/pyroptotic cell death.</title>
        <authorList>
            <person name="Rogers C."/>
            <person name="Fernandes-Alnemri T."/>
            <person name="Mayes L."/>
            <person name="Alnemri D."/>
            <person name="Cingolani G."/>
            <person name="Alnemri E.S."/>
        </authorList>
    </citation>
    <scope>FUNCTION (GASDERMIN-E</scope>
    <scope>N-TERMINAL)</scope>
    <scope>ACTIVITY REGULATION</scope>
    <scope>CLEAVAGE BY CASP3</scope>
    <scope>SUBCELLULAR LOCATION</scope>
    <scope>DOMAIN</scope>
    <scope>MUTAGENESIS OF PHE-2; LYS-39; LYS-40; LYS-41 AND ASP-270</scope>
</reference>
<reference key="23">
    <citation type="journal article" date="2020" name="Nature">
        <title>Gasdermin E suppresses tumour growth by activating anti-tumour immunity.</title>
        <authorList>
            <person name="Zhang Z."/>
            <person name="Zhang Y."/>
            <person name="Xia S."/>
            <person name="Kong Q."/>
            <person name="Li S."/>
            <person name="Liu X."/>
            <person name="Junqueira C."/>
            <person name="Meza-Sosa K.F."/>
            <person name="Mok T.M.Y."/>
            <person name="Ansara J."/>
            <person name="Sengupta S."/>
            <person name="Yao Y."/>
            <person name="Wu H."/>
            <person name="Lieberman J."/>
        </authorList>
    </citation>
    <scope>FUNCTION (GASDERMIN-E</scope>
    <scope>N-TERMINAL)</scope>
    <scope>ACTIVITY REGULATION</scope>
    <scope>CLEAVAGE BY GZMB</scope>
    <scope>DOMAIN</scope>
    <scope>MUTAGENESIS OF PHE-2 AND ASP-270</scope>
    <scope>VARIANTS TYR-14; VAL-18; ASP-24; CYS-44; ILE-48; THR-137; GLU-199; LEU-212 AND ASN-217</scope>
    <scope>CHARACTERIZATION OF VARIANTS TYR-14; VAL-18; ASP-24; CYS-44; ILE-48; THR-137; GLU-199; LEU-212 AND ASN-217</scope>
</reference>
<reference key="24">
    <citation type="journal article" date="2020" name="Science">
        <title>Succination inactivates gasdermin D and blocks pyroptosis.</title>
        <authorList>
            <person name="Humphries F."/>
            <person name="Shmuel-Galia L."/>
            <person name="Ketelut-Carneiro N."/>
            <person name="Li S."/>
            <person name="Wang B."/>
            <person name="Nemmara V.V."/>
            <person name="Wilson R."/>
            <person name="Jiang Z."/>
            <person name="Khalighinejad F."/>
            <person name="Muneeruddin K."/>
            <person name="Shaffer S.A."/>
            <person name="Dutta R."/>
            <person name="Ionete C."/>
            <person name="Pesiridis S."/>
            <person name="Yang S."/>
            <person name="Thompson P.R."/>
            <person name="Fitzgerald K.A."/>
        </authorList>
    </citation>
    <scope>SUCCINATION AT CYS-45; CYS-156; CYS-168; CYS-180; CYS-235; CYS-371; CYS-417; CYS-408 AND CYS-489</scope>
</reference>
<reference key="25">
    <citation type="journal article" date="2020" name="Sci. Immunol.">
        <title>Gasdermin E-mediated target cell pyroptosis by CAR T cells triggers cytokine release syndrome.</title>
        <authorList>
            <person name="Liu Y."/>
            <person name="Fang Y."/>
            <person name="Chen X."/>
            <person name="Wang Z."/>
            <person name="Liang X."/>
            <person name="Zhang T."/>
            <person name="Liu M."/>
            <person name="Zhou N."/>
            <person name="Lv J."/>
            <person name="Tang K."/>
            <person name="Xie J."/>
            <person name="Gao Y."/>
            <person name="Cheng F."/>
            <person name="Zhou Y."/>
            <person name="Zhang Z."/>
            <person name="Hu Y."/>
            <person name="Zhang X."/>
            <person name="Gao Q."/>
            <person name="Zhang Y."/>
            <person name="Huang B."/>
        </authorList>
    </citation>
    <scope>FUNCTION (GASDERMIN-E</scope>
    <scope>N-TERMINAL)</scope>
    <scope>ACTIVITY REGULATION</scope>
    <scope>CLEAVAGE BY GZMB</scope>
</reference>
<reference key="26">
    <citation type="journal article" date="2021" name="Cell Rep.">
        <title>Gasdermin E permits interleukin-1 beta release in distinct sublytic and pyroptotic phases.</title>
        <authorList>
            <person name="Zhou B."/>
            <person name="Abbott D.W."/>
        </authorList>
    </citation>
    <scope>FUNCTION</scope>
    <scope>ACTIVITY REGULATION</scope>
    <scope>MUTAGENESIS OF ASP-270</scope>
</reference>
<reference key="27">
    <citation type="journal article" date="2022" name="Elife">
        <title>Zika virus causes placental pyroptosis and associated adverse fetal outcomes by activating GSDME.</title>
        <authorList>
            <person name="Zhao Z."/>
            <person name="Li Q."/>
            <person name="Ashraf U."/>
            <person name="Yang M."/>
            <person name="Zhu W."/>
            <person name="Gu J."/>
            <person name="Chen Z."/>
            <person name="Gu C."/>
            <person name="Si Y."/>
            <person name="Cao S."/>
            <person name="Ye J."/>
        </authorList>
    </citation>
    <scope>FUNCTION (MICROBIAL INFECTION)</scope>
</reference>
<reference key="28">
    <citation type="journal article" date="2022" name="Mol. Cell">
        <title>Human NLRP1 is a sensor of pathogenic coronavirus 3CL proteases in lung epithelial cells.</title>
        <authorList>
            <consortium name="COVID Human Genetic Effort"/>
            <person name="Planes R."/>
            <person name="Pinilla M."/>
            <person name="Santoni K."/>
            <person name="Hessel A."/>
            <person name="Passemar C."/>
            <person name="Lay K."/>
            <person name="Paillette P."/>
            <person name="Valadao A.C."/>
            <person name="Robinson K.S."/>
            <person name="Bastard P."/>
            <person name="Lam N."/>
            <person name="Fadrique R."/>
            <person name="Rossi I."/>
            <person name="Pericat D."/>
            <person name="Bagayoko S."/>
            <person name="Leon-Icaza S.A."/>
            <person name="Rombouts Y."/>
            <person name="Perouzel E."/>
            <person name="Tiraby M."/>
            <person name="Zhang Q."/>
            <person name="Cicuta P."/>
            <person name="Jouanguy E."/>
            <person name="Neyrolles O."/>
            <person name="Bryant C.E."/>
            <person name="Floto A.R."/>
            <person name="Goujon C."/>
            <person name="Lei F.Z."/>
            <person name="Martin-Blondel G."/>
            <person name="Silva S."/>
            <person name="Casanova J.L."/>
            <person name="Cougoule C."/>
            <person name="Reversade B."/>
            <person name="Marcoux J."/>
            <person name="Ravet E."/>
            <person name="Meunier E."/>
        </authorList>
    </citation>
    <scope>FUNCTION</scope>
    <scope>ACTIVITY REGULATION</scope>
    <scope>ACTIVITY REGULATION (MICROBIAL INFECTION)</scope>
</reference>
<reference key="29">
    <citation type="journal article" date="2023" name="Cancer Res.">
        <title>USP48 Stabilizes Gasdermin E to Promote Pyroptosis in Cancer.</title>
        <authorList>
            <person name="Ren Y."/>
            <person name="Feng M."/>
            <person name="Hao X."/>
            <person name="Liu X."/>
            <person name="Li J."/>
            <person name="Li P."/>
            <person name="Gao J."/>
            <person name="Qi Q."/>
            <person name="Du L."/>
            <person name="Wang C."/>
            <person name="Wang Q."/>
            <person name="Wang Y."/>
        </authorList>
    </citation>
    <scope>FUNCTION</scope>
    <scope>UBIQUITINATION AT LYS-120 AND LYS-189</scope>
</reference>
<reference key="30">
    <citation type="journal article" date="2024" name="Nature">
        <title>ROS-dependent S-palmitoylation activates cleaved and intact gasdermin D.</title>
        <authorList>
            <person name="Du G."/>
            <person name="Healy L.B."/>
            <person name="David L."/>
            <person name="Walker C."/>
            <person name="El-Baba T.J."/>
            <person name="Lutomski C.A."/>
            <person name="Goh B."/>
            <person name="Gu B."/>
            <person name="Pi X."/>
            <person name="Devant P."/>
            <person name="Fontana P."/>
            <person name="Dong Y."/>
            <person name="Ma X."/>
            <person name="Miao R."/>
            <person name="Balasubramanian A."/>
            <person name="Puthenveetil R."/>
            <person name="Banerjee A."/>
            <person name="Luo H.R."/>
            <person name="Kagan J.C."/>
            <person name="Oh S.F."/>
            <person name="Robinson C.V."/>
            <person name="Lieberman J."/>
            <person name="Wu H."/>
        </authorList>
    </citation>
    <scope>PALMITOYLATION</scope>
</reference>
<accession>O60443</accession>
<accession>A4D156</accession>
<accession>B2RAX9</accession>
<accession>B3KT05</accession>
<accession>O14590</accession>
<accession>Q08AQ8</accession>
<accession>Q9UBV3</accession>
<dbReference type="EMBL" id="AF073308">
    <property type="protein sequence ID" value="AAC69324.1"/>
    <property type="molecule type" value="mRNA"/>
</dbReference>
<dbReference type="EMBL" id="AF075171">
    <property type="protein sequence ID" value="AAC69326.1"/>
    <property type="molecule type" value="mRNA"/>
</dbReference>
<dbReference type="EMBL" id="AF131765">
    <property type="protein sequence ID" value="AAD20039.1"/>
    <property type="molecule type" value="mRNA"/>
</dbReference>
<dbReference type="EMBL" id="AK094714">
    <property type="protein sequence ID" value="BAG52917.1"/>
    <property type="molecule type" value="mRNA"/>
</dbReference>
<dbReference type="EMBL" id="AK314402">
    <property type="protein sequence ID" value="BAG37026.1"/>
    <property type="molecule type" value="mRNA"/>
</dbReference>
<dbReference type="EMBL" id="AC003093">
    <property type="protein sequence ID" value="AAB83938.1"/>
    <property type="status" value="ALT_SEQ"/>
    <property type="molecule type" value="Genomic_DNA"/>
</dbReference>
<dbReference type="EMBL" id="CH236948">
    <property type="protein sequence ID" value="EAL24246.1"/>
    <property type="molecule type" value="Genomic_DNA"/>
</dbReference>
<dbReference type="EMBL" id="CH471073">
    <property type="protein sequence ID" value="EAW93813.1"/>
    <property type="molecule type" value="Genomic_DNA"/>
</dbReference>
<dbReference type="EMBL" id="BC125065">
    <property type="protein sequence ID" value="AAI25066.1"/>
    <property type="molecule type" value="mRNA"/>
</dbReference>
<dbReference type="EMBL" id="AF007790">
    <property type="protein sequence ID" value="AAC39635.2"/>
    <property type="status" value="ALT_INIT"/>
    <property type="molecule type" value="mRNA"/>
</dbReference>
<dbReference type="CCDS" id="CCDS47563.1">
    <molecule id="O60443-3"/>
</dbReference>
<dbReference type="CCDS" id="CCDS5389.1">
    <molecule id="O60443-1"/>
</dbReference>
<dbReference type="RefSeq" id="NP_001120925.1">
    <molecule id="O60443-1"/>
    <property type="nucleotide sequence ID" value="NM_001127453.2"/>
</dbReference>
<dbReference type="RefSeq" id="NP_001120926.1">
    <molecule id="O60443-3"/>
    <property type="nucleotide sequence ID" value="NM_001127454.2"/>
</dbReference>
<dbReference type="RefSeq" id="NP_004394.1">
    <molecule id="O60443-1"/>
    <property type="nucleotide sequence ID" value="NM_004403.3"/>
</dbReference>
<dbReference type="RefSeq" id="XP_016867291.1">
    <molecule id="O60443-3"/>
    <property type="nucleotide sequence ID" value="XM_017011802.2"/>
</dbReference>
<dbReference type="RefSeq" id="XP_024302438.1">
    <molecule id="O60443-1"/>
    <property type="nucleotide sequence ID" value="XM_024446670.2"/>
</dbReference>
<dbReference type="RefSeq" id="XP_054213373.1">
    <molecule id="O60443-1"/>
    <property type="nucleotide sequence ID" value="XM_054357398.1"/>
</dbReference>
<dbReference type="RefSeq" id="XP_054213374.1">
    <molecule id="O60443-3"/>
    <property type="nucleotide sequence ID" value="XM_054357399.1"/>
</dbReference>
<dbReference type="BioGRID" id="108049">
    <property type="interactions" value="63"/>
</dbReference>
<dbReference type="FunCoup" id="O60443">
    <property type="interactions" value="518"/>
</dbReference>
<dbReference type="IntAct" id="O60443">
    <property type="interactions" value="35"/>
</dbReference>
<dbReference type="MINT" id="O60443"/>
<dbReference type="STRING" id="9606.ENSP00000339587"/>
<dbReference type="TCDB" id="1.C.123.1.5">
    <property type="family name" value="the pore-forming gasdermin (gasdermin) family"/>
</dbReference>
<dbReference type="GlyGen" id="O60443">
    <property type="glycosylation" value="1 site, 1 O-linked glycan (1 site)"/>
</dbReference>
<dbReference type="iPTMnet" id="O60443"/>
<dbReference type="PhosphoSitePlus" id="O60443"/>
<dbReference type="SwissPalm" id="O60443"/>
<dbReference type="BioMuta" id="GSDME"/>
<dbReference type="jPOST" id="O60443"/>
<dbReference type="MassIVE" id="O60443"/>
<dbReference type="PaxDb" id="9606-ENSP00000339587"/>
<dbReference type="PeptideAtlas" id="O60443"/>
<dbReference type="ProteomicsDB" id="3659"/>
<dbReference type="ProteomicsDB" id="49403">
    <molecule id="O60443-1"/>
</dbReference>
<dbReference type="ProteomicsDB" id="49404">
    <molecule id="O60443-2"/>
</dbReference>
<dbReference type="Antibodypedia" id="1157">
    <property type="antibodies" value="220 antibodies from 30 providers"/>
</dbReference>
<dbReference type="DNASU" id="1687"/>
<dbReference type="Ensembl" id="ENST00000342947.9">
    <molecule id="O60443-1"/>
    <property type="protein sequence ID" value="ENSP00000339587.3"/>
    <property type="gene ID" value="ENSG00000105928.16"/>
</dbReference>
<dbReference type="Ensembl" id="ENST00000409970.6">
    <molecule id="O60443-3"/>
    <property type="protein sequence ID" value="ENSP00000387119.1"/>
    <property type="gene ID" value="ENSG00000105928.16"/>
</dbReference>
<dbReference type="Ensembl" id="ENST00000419307.6">
    <molecule id="O60443-3"/>
    <property type="protein sequence ID" value="ENSP00000401332.1"/>
    <property type="gene ID" value="ENSG00000105928.16"/>
</dbReference>
<dbReference type="Ensembl" id="ENST00000645220.1">
    <molecule id="O60443-1"/>
    <property type="protein sequence ID" value="ENSP00000494186.1"/>
    <property type="gene ID" value="ENSG00000105928.16"/>
</dbReference>
<dbReference type="GeneID" id="1687"/>
<dbReference type="KEGG" id="hsa:1687"/>
<dbReference type="MANE-Select" id="ENST00000645220.1">
    <property type="protein sequence ID" value="ENSP00000494186.1"/>
    <property type="RefSeq nucleotide sequence ID" value="NM_001127453.2"/>
    <property type="RefSeq protein sequence ID" value="NP_001120925.1"/>
</dbReference>
<dbReference type="UCSC" id="uc003sxa.2">
    <molecule id="O60443-1"/>
    <property type="organism name" value="human"/>
</dbReference>
<dbReference type="AGR" id="HGNC:2810"/>
<dbReference type="CTD" id="1687"/>
<dbReference type="DisGeNET" id="1687"/>
<dbReference type="GeneCards" id="GSDME"/>
<dbReference type="GeneReviews" id="GSDME"/>
<dbReference type="HGNC" id="HGNC:2810">
    <property type="gene designation" value="GSDME"/>
</dbReference>
<dbReference type="HPA" id="ENSG00000105928">
    <property type="expression patterns" value="Low tissue specificity"/>
</dbReference>
<dbReference type="MalaCards" id="GSDME"/>
<dbReference type="MIM" id="600994">
    <property type="type" value="phenotype"/>
</dbReference>
<dbReference type="MIM" id="608798">
    <property type="type" value="gene"/>
</dbReference>
<dbReference type="neXtProt" id="NX_O60443"/>
<dbReference type="OpenTargets" id="ENSG00000105928"/>
<dbReference type="Orphanet" id="90635">
    <property type="disease" value="Rare autosomal dominant non-syndromic sensorineural deafness type DFNA"/>
</dbReference>
<dbReference type="PharmGKB" id="PA27281"/>
<dbReference type="VEuPathDB" id="HostDB:ENSG00000105928"/>
<dbReference type="eggNOG" id="ENOG502QRAB">
    <property type="taxonomic scope" value="Eukaryota"/>
</dbReference>
<dbReference type="GeneTree" id="ENSGT00940000155880"/>
<dbReference type="HOGENOM" id="CLU_042999_0_0_1"/>
<dbReference type="InParanoid" id="O60443"/>
<dbReference type="OMA" id="EMTNDCL"/>
<dbReference type="OrthoDB" id="8815334at2759"/>
<dbReference type="PAN-GO" id="O60443">
    <property type="GO annotations" value="2 GO annotations based on evolutionary models"/>
</dbReference>
<dbReference type="PhylomeDB" id="O60443"/>
<dbReference type="TreeFam" id="TF352821"/>
<dbReference type="PathwayCommons" id="O60443"/>
<dbReference type="Reactome" id="R-HSA-111457">
    <property type="pathway name" value="Release of apoptotic factors from the mitochondria"/>
</dbReference>
<dbReference type="Reactome" id="R-HSA-5620971">
    <property type="pathway name" value="Pyroptosis"/>
</dbReference>
<dbReference type="Reactome" id="R-HSA-5686938">
    <property type="pathway name" value="Regulation of TLR by endogenous ligand"/>
</dbReference>
<dbReference type="Reactome" id="R-HSA-9710421">
    <property type="pathway name" value="Defective pyroptosis"/>
</dbReference>
<dbReference type="SignaLink" id="O60443"/>
<dbReference type="BioGRID-ORCS" id="1687">
    <property type="hits" value="9 hits in 1147 CRISPR screens"/>
</dbReference>
<dbReference type="ChiTaRS" id="DFNA5">
    <property type="organism name" value="human"/>
</dbReference>
<dbReference type="GeneWiki" id="DFNA5"/>
<dbReference type="GenomeRNAi" id="1687"/>
<dbReference type="Pharos" id="O60443">
    <property type="development level" value="Tbio"/>
</dbReference>
<dbReference type="PRO" id="PR:O60443"/>
<dbReference type="Proteomes" id="UP000005640">
    <property type="component" value="Chromosome 7"/>
</dbReference>
<dbReference type="RNAct" id="O60443">
    <property type="molecule type" value="protein"/>
</dbReference>
<dbReference type="Bgee" id="ENSG00000105928">
    <property type="expression patterns" value="Expressed in germinal epithelium of ovary and 190 other cell types or tissues"/>
</dbReference>
<dbReference type="ExpressionAtlas" id="O60443">
    <property type="expression patterns" value="baseline and differential"/>
</dbReference>
<dbReference type="GO" id="GO:0005737">
    <property type="term" value="C:cytoplasm"/>
    <property type="evidence" value="ECO:0000318"/>
    <property type="project" value="GO_Central"/>
</dbReference>
<dbReference type="GO" id="GO:0005829">
    <property type="term" value="C:cytosol"/>
    <property type="evidence" value="ECO:0000314"/>
    <property type="project" value="HPA"/>
</dbReference>
<dbReference type="GO" id="GO:0016020">
    <property type="term" value="C:membrane"/>
    <property type="evidence" value="ECO:0000314"/>
    <property type="project" value="UniProtKB"/>
</dbReference>
<dbReference type="GO" id="GO:0005886">
    <property type="term" value="C:plasma membrane"/>
    <property type="evidence" value="ECO:0000314"/>
    <property type="project" value="UniProtKB"/>
</dbReference>
<dbReference type="GO" id="GO:1901612">
    <property type="term" value="F:cardiolipin binding"/>
    <property type="evidence" value="ECO:0000314"/>
    <property type="project" value="UniProtKB"/>
</dbReference>
<dbReference type="GO" id="GO:0005546">
    <property type="term" value="F:phosphatidylinositol-4,5-bisphosphate binding"/>
    <property type="evidence" value="ECO:0000314"/>
    <property type="project" value="UniProtKB"/>
</dbReference>
<dbReference type="GO" id="GO:0022829">
    <property type="term" value="F:wide pore channel activity"/>
    <property type="evidence" value="ECO:0000314"/>
    <property type="project" value="UniProt"/>
</dbReference>
<dbReference type="GO" id="GO:0071356">
    <property type="term" value="P:cellular response to tumor necrosis factor"/>
    <property type="evidence" value="ECO:0000314"/>
    <property type="project" value="UniProtKB"/>
</dbReference>
<dbReference type="GO" id="GO:0098586">
    <property type="term" value="P:cellular response to virus"/>
    <property type="evidence" value="ECO:0000314"/>
    <property type="project" value="UniProtKB"/>
</dbReference>
<dbReference type="GO" id="GO:0042491">
    <property type="term" value="P:inner ear auditory receptor cell differentiation"/>
    <property type="evidence" value="ECO:0007669"/>
    <property type="project" value="Ensembl"/>
</dbReference>
<dbReference type="GO" id="GO:0008285">
    <property type="term" value="P:negative regulation of cell population proliferation"/>
    <property type="evidence" value="ECO:0000314"/>
    <property type="project" value="UniProtKB"/>
</dbReference>
<dbReference type="GO" id="GO:0002839">
    <property type="term" value="P:positive regulation of immune response to tumor cell"/>
    <property type="evidence" value="ECO:0000314"/>
    <property type="project" value="UniProt"/>
</dbReference>
<dbReference type="GO" id="GO:2001244">
    <property type="term" value="P:positive regulation of intrinsic apoptotic signaling pathway"/>
    <property type="evidence" value="ECO:0000314"/>
    <property type="project" value="UniProtKB"/>
</dbReference>
<dbReference type="GO" id="GO:0043410">
    <property type="term" value="P:positive regulation of MAPK cascade"/>
    <property type="evidence" value="ECO:0000315"/>
    <property type="project" value="UniProtKB"/>
</dbReference>
<dbReference type="GO" id="GO:0012501">
    <property type="term" value="P:programmed cell death"/>
    <property type="evidence" value="ECO:0000315"/>
    <property type="project" value="UniProtKB"/>
</dbReference>
<dbReference type="GO" id="GO:0141201">
    <property type="term" value="P:pyroptotic cell death"/>
    <property type="evidence" value="ECO:0000314"/>
    <property type="project" value="UniProt"/>
</dbReference>
<dbReference type="GO" id="GO:0070269">
    <property type="term" value="P:pyroptotic inflammatory response"/>
    <property type="evidence" value="ECO:0000314"/>
    <property type="project" value="UniProtKB"/>
</dbReference>
<dbReference type="GO" id="GO:0007605">
    <property type="term" value="P:sensory perception of sound"/>
    <property type="evidence" value="ECO:0000304"/>
    <property type="project" value="ProtInc"/>
</dbReference>
<dbReference type="InterPro" id="IPR040460">
    <property type="entry name" value="Gasdermin_pore"/>
</dbReference>
<dbReference type="InterPro" id="IPR041263">
    <property type="entry name" value="Gasdermin_PUB"/>
</dbReference>
<dbReference type="InterPro" id="IPR042377">
    <property type="entry name" value="GSDME"/>
</dbReference>
<dbReference type="PANTHER" id="PTHR15207:SF1">
    <property type="entry name" value="GASDERMIN-E"/>
    <property type="match status" value="1"/>
</dbReference>
<dbReference type="PANTHER" id="PTHR15207">
    <property type="entry name" value="NONSYNDROMIC HEARING IMPAIRMENT PROTEIN"/>
    <property type="match status" value="1"/>
</dbReference>
<dbReference type="Pfam" id="PF04598">
    <property type="entry name" value="Gasdermin"/>
    <property type="match status" value="1"/>
</dbReference>
<dbReference type="Pfam" id="PF17708">
    <property type="entry name" value="Gasdermin_C"/>
    <property type="match status" value="1"/>
</dbReference>
<sequence>MFAKATRNFLREVDADGDLIAVSNLNDSDKLQLLSLVTKKKRFWCWQRPKYQFLSLTLGDVLIEDQFPSPVVVESDFVKYEGKFANHVSGTLETALGKVKLNLGGSSRVESQSSFGTLRKQEVDLQQLIRDSAERTINLRNPVLQQVLEGRNEVLCVLTQKITTMQKCVISEHMQVEEKCGGIVGIQTKTVQVSATEDGNVTKDSNVVLEIPAATTIAYGVIELYVKLDGQFEFCLLRGKQGGFENKKRIDSVYLDPLVFREFAFIDMPDAAHGISSQDGPLSVLKQATLLLERNFHPFAELPEPQQTALSDIFQAVLFDDELLMVLEPVCDDLVSGLSPTVAVLGELKPRQQQDLVAFLQLVGCSLQGGCPGPEDAGSKQLFMTAYFLVSALAEMPDSAAALLGTCCKLQIIPTLCHLLRALSDDGVSDLEDPTLTPLKDTERFGIVQRLFASADISLERLKSSVKAVILKDSKVFPLLLCITLNGLCALGREHS</sequence>